<gene>
    <name evidence="20 25" type="primary">TRMT1</name>
</gene>
<reference key="1">
    <citation type="journal article" date="2000" name="Nucleic Acids Res.">
        <title>The human tRNA(m22G26)dimethyltransferase: functional expression and characterization of a cloned hTRM1 gene.</title>
        <authorList>
            <person name="Liu J."/>
            <person name="Straby K.B."/>
        </authorList>
    </citation>
    <scope>NUCLEOTIDE SEQUENCE [MRNA] (ISOFORM 1)</scope>
    <scope>FUNCTION</scope>
    <scope>CATALYTIC ACTIVITY</scope>
    <source>
        <tissue>Placenta</tissue>
    </source>
</reference>
<reference key="2">
    <citation type="journal article" date="2004" name="Nat. Genet.">
        <title>Complete sequencing and characterization of 21,243 full-length human cDNAs.</title>
        <authorList>
            <person name="Ota T."/>
            <person name="Suzuki Y."/>
            <person name="Nishikawa T."/>
            <person name="Otsuki T."/>
            <person name="Sugiyama T."/>
            <person name="Irie R."/>
            <person name="Wakamatsu A."/>
            <person name="Hayashi K."/>
            <person name="Sato H."/>
            <person name="Nagai K."/>
            <person name="Kimura K."/>
            <person name="Makita H."/>
            <person name="Sekine M."/>
            <person name="Obayashi M."/>
            <person name="Nishi T."/>
            <person name="Shibahara T."/>
            <person name="Tanaka T."/>
            <person name="Ishii S."/>
            <person name="Yamamoto J."/>
            <person name="Saito K."/>
            <person name="Kawai Y."/>
            <person name="Isono Y."/>
            <person name="Nakamura Y."/>
            <person name="Nagahari K."/>
            <person name="Murakami K."/>
            <person name="Yasuda T."/>
            <person name="Iwayanagi T."/>
            <person name="Wagatsuma M."/>
            <person name="Shiratori A."/>
            <person name="Sudo H."/>
            <person name="Hosoiri T."/>
            <person name="Kaku Y."/>
            <person name="Kodaira H."/>
            <person name="Kondo H."/>
            <person name="Sugawara M."/>
            <person name="Takahashi M."/>
            <person name="Kanda K."/>
            <person name="Yokoi T."/>
            <person name="Furuya T."/>
            <person name="Kikkawa E."/>
            <person name="Omura Y."/>
            <person name="Abe K."/>
            <person name="Kamihara K."/>
            <person name="Katsuta N."/>
            <person name="Sato K."/>
            <person name="Tanikawa M."/>
            <person name="Yamazaki M."/>
            <person name="Ninomiya K."/>
            <person name="Ishibashi T."/>
            <person name="Yamashita H."/>
            <person name="Murakawa K."/>
            <person name="Fujimori K."/>
            <person name="Tanai H."/>
            <person name="Kimata M."/>
            <person name="Watanabe M."/>
            <person name="Hiraoka S."/>
            <person name="Chiba Y."/>
            <person name="Ishida S."/>
            <person name="Ono Y."/>
            <person name="Takiguchi S."/>
            <person name="Watanabe S."/>
            <person name="Yosida M."/>
            <person name="Hotuta T."/>
            <person name="Kusano J."/>
            <person name="Kanehori K."/>
            <person name="Takahashi-Fujii A."/>
            <person name="Hara H."/>
            <person name="Tanase T.-O."/>
            <person name="Nomura Y."/>
            <person name="Togiya S."/>
            <person name="Komai F."/>
            <person name="Hara R."/>
            <person name="Takeuchi K."/>
            <person name="Arita M."/>
            <person name="Imose N."/>
            <person name="Musashino K."/>
            <person name="Yuuki H."/>
            <person name="Oshima A."/>
            <person name="Sasaki N."/>
            <person name="Aotsuka S."/>
            <person name="Yoshikawa Y."/>
            <person name="Matsunawa H."/>
            <person name="Ichihara T."/>
            <person name="Shiohata N."/>
            <person name="Sano S."/>
            <person name="Moriya S."/>
            <person name="Momiyama H."/>
            <person name="Satoh N."/>
            <person name="Takami S."/>
            <person name="Terashima Y."/>
            <person name="Suzuki O."/>
            <person name="Nakagawa S."/>
            <person name="Senoh A."/>
            <person name="Mizoguchi H."/>
            <person name="Goto Y."/>
            <person name="Shimizu F."/>
            <person name="Wakebe H."/>
            <person name="Hishigaki H."/>
            <person name="Watanabe T."/>
            <person name="Sugiyama A."/>
            <person name="Takemoto M."/>
            <person name="Kawakami B."/>
            <person name="Yamazaki M."/>
            <person name="Watanabe K."/>
            <person name="Kumagai A."/>
            <person name="Itakura S."/>
            <person name="Fukuzumi Y."/>
            <person name="Fujimori Y."/>
            <person name="Komiyama M."/>
            <person name="Tashiro H."/>
            <person name="Tanigami A."/>
            <person name="Fujiwara T."/>
            <person name="Ono T."/>
            <person name="Yamada K."/>
            <person name="Fujii Y."/>
            <person name="Ozaki K."/>
            <person name="Hirao M."/>
            <person name="Ohmori Y."/>
            <person name="Kawabata A."/>
            <person name="Hikiji T."/>
            <person name="Kobatake N."/>
            <person name="Inagaki H."/>
            <person name="Ikema Y."/>
            <person name="Okamoto S."/>
            <person name="Okitani R."/>
            <person name="Kawakami T."/>
            <person name="Noguchi S."/>
            <person name="Itoh T."/>
            <person name="Shigeta K."/>
            <person name="Senba T."/>
            <person name="Matsumura K."/>
            <person name="Nakajima Y."/>
            <person name="Mizuno T."/>
            <person name="Morinaga M."/>
            <person name="Sasaki M."/>
            <person name="Togashi T."/>
            <person name="Oyama M."/>
            <person name="Hata H."/>
            <person name="Watanabe M."/>
            <person name="Komatsu T."/>
            <person name="Mizushima-Sugano J."/>
            <person name="Satoh T."/>
            <person name="Shirai Y."/>
            <person name="Takahashi Y."/>
            <person name="Nakagawa K."/>
            <person name="Okumura K."/>
            <person name="Nagase T."/>
            <person name="Nomura N."/>
            <person name="Kikuchi H."/>
            <person name="Masuho Y."/>
            <person name="Yamashita R."/>
            <person name="Nakai K."/>
            <person name="Yada T."/>
            <person name="Nakamura Y."/>
            <person name="Ohara O."/>
            <person name="Isogai T."/>
            <person name="Sugano S."/>
        </authorList>
    </citation>
    <scope>NUCLEOTIDE SEQUENCE [LARGE SCALE MRNA] (ISOFORM 1)</scope>
    <source>
        <tissue>Colon mucosa</tissue>
    </source>
</reference>
<reference key="3">
    <citation type="journal article" date="2004" name="Nature">
        <title>The DNA sequence and biology of human chromosome 19.</title>
        <authorList>
            <person name="Grimwood J."/>
            <person name="Gordon L.A."/>
            <person name="Olsen A.S."/>
            <person name="Terry A."/>
            <person name="Schmutz J."/>
            <person name="Lamerdin J.E."/>
            <person name="Hellsten U."/>
            <person name="Goodstein D."/>
            <person name="Couronne O."/>
            <person name="Tran-Gyamfi M."/>
            <person name="Aerts A."/>
            <person name="Altherr M."/>
            <person name="Ashworth L."/>
            <person name="Bajorek E."/>
            <person name="Black S."/>
            <person name="Branscomb E."/>
            <person name="Caenepeel S."/>
            <person name="Carrano A.V."/>
            <person name="Caoile C."/>
            <person name="Chan Y.M."/>
            <person name="Christensen M."/>
            <person name="Cleland C.A."/>
            <person name="Copeland A."/>
            <person name="Dalin E."/>
            <person name="Dehal P."/>
            <person name="Denys M."/>
            <person name="Detter J.C."/>
            <person name="Escobar J."/>
            <person name="Flowers D."/>
            <person name="Fotopulos D."/>
            <person name="Garcia C."/>
            <person name="Georgescu A.M."/>
            <person name="Glavina T."/>
            <person name="Gomez M."/>
            <person name="Gonzales E."/>
            <person name="Groza M."/>
            <person name="Hammon N."/>
            <person name="Hawkins T."/>
            <person name="Haydu L."/>
            <person name="Ho I."/>
            <person name="Huang W."/>
            <person name="Israni S."/>
            <person name="Jett J."/>
            <person name="Kadner K."/>
            <person name="Kimball H."/>
            <person name="Kobayashi A."/>
            <person name="Larionov V."/>
            <person name="Leem S.-H."/>
            <person name="Lopez F."/>
            <person name="Lou Y."/>
            <person name="Lowry S."/>
            <person name="Malfatti S."/>
            <person name="Martinez D."/>
            <person name="McCready P.M."/>
            <person name="Medina C."/>
            <person name="Morgan J."/>
            <person name="Nelson K."/>
            <person name="Nolan M."/>
            <person name="Ovcharenko I."/>
            <person name="Pitluck S."/>
            <person name="Pollard M."/>
            <person name="Popkie A.P."/>
            <person name="Predki P."/>
            <person name="Quan G."/>
            <person name="Ramirez L."/>
            <person name="Rash S."/>
            <person name="Retterer J."/>
            <person name="Rodriguez A."/>
            <person name="Rogers S."/>
            <person name="Salamov A."/>
            <person name="Salazar A."/>
            <person name="She X."/>
            <person name="Smith D."/>
            <person name="Slezak T."/>
            <person name="Solovyev V."/>
            <person name="Thayer N."/>
            <person name="Tice H."/>
            <person name="Tsai M."/>
            <person name="Ustaszewska A."/>
            <person name="Vo N."/>
            <person name="Wagner M."/>
            <person name="Wheeler J."/>
            <person name="Wu K."/>
            <person name="Xie G."/>
            <person name="Yang J."/>
            <person name="Dubchak I."/>
            <person name="Furey T.S."/>
            <person name="DeJong P."/>
            <person name="Dickson M."/>
            <person name="Gordon D."/>
            <person name="Eichler E.E."/>
            <person name="Pennacchio L.A."/>
            <person name="Richardson P."/>
            <person name="Stubbs L."/>
            <person name="Rokhsar D.S."/>
            <person name="Myers R.M."/>
            <person name="Rubin E.M."/>
            <person name="Lucas S.M."/>
        </authorList>
    </citation>
    <scope>NUCLEOTIDE SEQUENCE [LARGE SCALE GENOMIC DNA]</scope>
</reference>
<reference key="4">
    <citation type="journal article" date="2004" name="Genome Res.">
        <title>The status, quality, and expansion of the NIH full-length cDNA project: the Mammalian Gene Collection (MGC).</title>
        <authorList>
            <consortium name="The MGC Project Team"/>
        </authorList>
    </citation>
    <scope>NUCLEOTIDE SEQUENCE [LARGE SCALE MRNA] (ISOFORMS 1 AND 2)</scope>
    <source>
        <tissue>Brain</tissue>
        <tissue>Cervix</tissue>
        <tissue>Colon</tissue>
    </source>
</reference>
<reference key="5">
    <citation type="journal article" date="2006" name="Nat. Biotechnol.">
        <title>A probability-based approach for high-throughput protein phosphorylation analysis and site localization.</title>
        <authorList>
            <person name="Beausoleil S.A."/>
            <person name="Villen J."/>
            <person name="Gerber S.A."/>
            <person name="Rush J."/>
            <person name="Gygi S.P."/>
        </authorList>
    </citation>
    <scope>PHOSPHORYLATION [LARGE SCALE ANALYSIS] AT THR-646</scope>
    <scope>IDENTIFICATION BY MASS SPECTROMETRY [LARGE SCALE ANALYSIS]</scope>
    <source>
        <tissue>Cervix carcinoma</tissue>
    </source>
</reference>
<reference key="6">
    <citation type="journal article" date="2008" name="Proc. Natl. Acad. Sci. U.S.A.">
        <title>A quantitative atlas of mitotic phosphorylation.</title>
        <authorList>
            <person name="Dephoure N."/>
            <person name="Zhou C."/>
            <person name="Villen J."/>
            <person name="Beausoleil S.A."/>
            <person name="Bakalarski C.E."/>
            <person name="Elledge S.J."/>
            <person name="Gygi S.P."/>
        </authorList>
    </citation>
    <scope>PHOSPHORYLATION [LARGE SCALE ANALYSIS] AT SER-625; THR-628 AND THR-646</scope>
    <scope>IDENTIFICATION BY MASS SPECTROMETRY [LARGE SCALE ANALYSIS]</scope>
    <source>
        <tissue>Cervix carcinoma</tissue>
    </source>
</reference>
<reference key="7">
    <citation type="journal article" date="2009" name="Anal. Chem.">
        <title>Lys-N and trypsin cover complementary parts of the phosphoproteome in a refined SCX-based approach.</title>
        <authorList>
            <person name="Gauci S."/>
            <person name="Helbig A.O."/>
            <person name="Slijper M."/>
            <person name="Krijgsveld J."/>
            <person name="Heck A.J."/>
            <person name="Mohammed S."/>
        </authorList>
    </citation>
    <scope>IDENTIFICATION BY MASS SPECTROMETRY [LARGE SCALE ANALYSIS]</scope>
</reference>
<reference key="8">
    <citation type="journal article" date="2010" name="Sci. Signal.">
        <title>Quantitative phosphoproteomics reveals widespread full phosphorylation site occupancy during mitosis.</title>
        <authorList>
            <person name="Olsen J.V."/>
            <person name="Vermeulen M."/>
            <person name="Santamaria A."/>
            <person name="Kumar C."/>
            <person name="Miller M.L."/>
            <person name="Jensen L.J."/>
            <person name="Gnad F."/>
            <person name="Cox J."/>
            <person name="Jensen T.S."/>
            <person name="Nigg E.A."/>
            <person name="Brunak S."/>
            <person name="Mann M."/>
        </authorList>
    </citation>
    <scope>IDENTIFICATION BY MASS SPECTROMETRY [LARGE SCALE ANALYSIS]</scope>
    <source>
        <tissue>Cervix carcinoma</tissue>
    </source>
</reference>
<reference key="9">
    <citation type="journal article" date="2011" name="BMC Syst. Biol.">
        <title>Initial characterization of the human central proteome.</title>
        <authorList>
            <person name="Burkard T.R."/>
            <person name="Planyavsky M."/>
            <person name="Kaupe I."/>
            <person name="Breitwieser F.P."/>
            <person name="Buerckstuemmer T."/>
            <person name="Bennett K.L."/>
            <person name="Superti-Furga G."/>
            <person name="Colinge J."/>
        </authorList>
    </citation>
    <scope>IDENTIFICATION BY MASS SPECTROMETRY [LARGE SCALE ANALYSIS]</scope>
</reference>
<reference key="10">
    <citation type="journal article" date="2013" name="J. Proteome Res.">
        <title>Toward a comprehensive characterization of a human cancer cell phosphoproteome.</title>
        <authorList>
            <person name="Zhou H."/>
            <person name="Di Palma S."/>
            <person name="Preisinger C."/>
            <person name="Peng M."/>
            <person name="Polat A.N."/>
            <person name="Heck A.J."/>
            <person name="Mohammed S."/>
        </authorList>
    </citation>
    <scope>PHOSPHORYLATION [LARGE SCALE ANALYSIS] AT SER-517 AND SER-625</scope>
    <scope>IDENTIFICATION BY MASS SPECTROMETRY [LARGE SCALE ANALYSIS]</scope>
    <source>
        <tissue>Cervix carcinoma</tissue>
        <tissue>Erythroleukemia</tissue>
    </source>
</reference>
<reference key="11">
    <citation type="journal article" date="2011" name="Nature">
        <title>Deep sequencing reveals 50 novel genes for recessive cognitive disorders.</title>
        <authorList>
            <person name="Najmabadi H."/>
            <person name="Hu H."/>
            <person name="Garshasbi M."/>
            <person name="Zemojtel T."/>
            <person name="Abedini S.S."/>
            <person name="Chen W."/>
            <person name="Hosseini M."/>
            <person name="Behjati F."/>
            <person name="Haas S."/>
            <person name="Jamali P."/>
            <person name="Zecha A."/>
            <person name="Mohseni M."/>
            <person name="Puettmann L."/>
            <person name="Vahid L.N."/>
            <person name="Jensen C."/>
            <person name="Moheb L.A."/>
            <person name="Bienek M."/>
            <person name="Larti F."/>
            <person name="Mueller I."/>
            <person name="Weissmann R."/>
            <person name="Darvish H."/>
            <person name="Wrogemann K."/>
            <person name="Hadavi V."/>
            <person name="Lipkowitz B."/>
            <person name="Esmaeeli-Nieh S."/>
            <person name="Wieczorek D."/>
            <person name="Kariminejad R."/>
            <person name="Firouzabadi S.G."/>
            <person name="Cohen M."/>
            <person name="Fattahi Z."/>
            <person name="Rost I."/>
            <person name="Mojahedi F."/>
            <person name="Hertzberg C."/>
            <person name="Dehghan A."/>
            <person name="Rajab A."/>
            <person name="Banavandi M.J."/>
            <person name="Hoffer J."/>
            <person name="Falah M."/>
            <person name="Musante L."/>
            <person name="Kalscheuer V."/>
            <person name="Ullmann R."/>
            <person name="Kuss A.W."/>
            <person name="Tzschach A."/>
            <person name="Kahrizi K."/>
            <person name="Ropers H.H."/>
        </authorList>
    </citation>
    <scope>INVOLVEMENT IN MRT68</scope>
</reference>
<reference key="12">
    <citation type="journal article" date="2015" name="PLoS ONE">
        <title>The role of a novel TRMT1 gene mutation and rare grm1 gene defect in intellectual disability in two azeri families.</title>
        <authorList>
            <person name="Davarniya B."/>
            <person name="Hu H."/>
            <person name="Kahrizi K."/>
            <person name="Musante L."/>
            <person name="Fattahi Z."/>
            <person name="Hosseini M."/>
            <person name="Maqsoud F."/>
            <person name="Farajollahi R."/>
            <person name="Wienker T.F."/>
            <person name="Ropers H.H."/>
            <person name="Najmabadi H."/>
        </authorList>
    </citation>
    <scope>INVOLVEMENT IN MRT68</scope>
</reference>
<reference key="13">
    <citation type="journal article" date="2017" name="Mol. Cell. Biol.">
        <title>TRMT1-catalyzed tRNA modifications are required for redox homeostasis to ensure proper cellular proliferation and oxidative stress survival.</title>
        <authorList>
            <person name="Dewe J.M."/>
            <person name="Fuller B.L."/>
            <person name="Lentini J.M."/>
            <person name="Kellner S.M."/>
            <person name="Fu D."/>
        </authorList>
    </citation>
    <scope>FUNCTION</scope>
    <scope>CATALYTIC ACTIVITY</scope>
    <scope>SUBCELLULAR LOCATION</scope>
    <scope>MUTAGENESIS OF CYS-348</scope>
</reference>
<reference key="14">
    <citation type="journal article" date="2018" name="Am. J. Med. Genet. A">
        <title>Mutations in the tRNA methyltransferase 1 gene TRMT1 cause congenital microcephaly, isolated inferior vermian hypoplasia and cystic leukomalacia in addition to intellectual disability.</title>
        <authorList>
            <person name="Blaesius K."/>
            <person name="Abbasi A.A."/>
            <person name="Tahir T.H."/>
            <person name="Tietze A."/>
            <person name="Picker-Minh S."/>
            <person name="Ali G."/>
            <person name="Farooq S."/>
            <person name="Hu H."/>
            <person name="Latif Z."/>
            <person name="Khan M.N."/>
            <person name="Kaindl A."/>
        </authorList>
    </citation>
    <scope>INVOLVEMENT IN MRT68</scope>
</reference>
<reference key="15">
    <citation type="journal article" date="2021" name="RNA Biol.">
        <title>Subcellular relocalization and nuclear redistribution of the RNA methyltransferases TRMT1 and TRMT1L upon neuronal activation.</title>
        <authorList>
            <person name="Jonkhout N."/>
            <person name="Cruciani S."/>
            <person name="Santos Vieira H.G."/>
            <person name="Tran J."/>
            <person name="Liu H."/>
            <person name="Liu G."/>
            <person name="Pickford R."/>
            <person name="Kaczorowski D."/>
            <person name="Franco G.R."/>
            <person name="Vauti F."/>
            <person name="Camacho N."/>
            <person name="Abedini S.S."/>
            <person name="Najmabadi H."/>
            <person name="Ribas de Pouplana L."/>
            <person name="Christ D."/>
            <person name="Schonrock N."/>
            <person name="Mattick J.S."/>
            <person name="Novoa E.M."/>
        </authorList>
    </citation>
    <scope>SUBCELLULAR LOCATION</scope>
    <scope>ALTERNATIVE SPLICING</scope>
</reference>
<reference key="16">
    <citation type="journal article" date="2023" name="Sci. China Life Sci.">
        <title>Human TRMT1 catalyzes m2G or m22G formation on tRNAs in a substrate-dependent manner.</title>
        <authorList>
            <person name="Xiong Q.P."/>
            <person name="Li J."/>
            <person name="Li H."/>
            <person name="Huang Z.X."/>
            <person name="Dong H."/>
            <person name="Wang E.D."/>
            <person name="Liu R.J."/>
        </authorList>
    </citation>
    <scope>FUNCTION</scope>
    <scope>CATALYTIC ACTIVITY</scope>
</reference>
<reference key="17">
    <citation type="journal article" date="2024" name="Elife">
        <title>Proteolytic cleavage and inactivation of the TRMT1 tRNA modification enzyme by SARS-CoV-2 main protease.</title>
        <authorList>
            <person name="Zhang K."/>
            <person name="Eldin P."/>
            <person name="Ciesla J.H."/>
            <person name="Briant L."/>
            <person name="Lentini J.M."/>
            <person name="Ramos J."/>
            <person name="Cobb J."/>
            <person name="Munger J."/>
            <person name="Fu D."/>
        </authorList>
    </citation>
    <scope>PROTEOLYTIC CLEAVAGE (MICROBIAL INFECTION)</scope>
    <scope>SUBCELLULAR LOCATION</scope>
    <scope>MUTAGENESIS OF GLN-530</scope>
</reference>
<reference key="18">
    <citation type="journal article" date="2025" name="Cell Rep.">
        <title>Human TRMT1 and TRMT1L paralogs ensure the proper modification state, stability, and function of tRNAs.</title>
        <authorList>
            <person name="Zhang K."/>
            <person name="Manning A.C."/>
            <person name="Lentini J.M."/>
            <person name="Howard J."/>
            <person name="Dalwigk F."/>
            <person name="Maroofian R."/>
            <person name="Efthymiou S."/>
            <person name="Chan P."/>
            <person name="Eliseev S.I."/>
            <person name="Yang Z."/>
            <person name="Chang H."/>
            <person name="Karimiani E.G."/>
            <person name="Bakhshoodeh B."/>
            <person name="Houlden H."/>
            <person name="Kaiser S.M."/>
            <person name="Lowe T.M."/>
            <person name="Fu D."/>
        </authorList>
    </citation>
    <scope>FUNCTION</scope>
    <scope>CATALYTIC ACTIVITY</scope>
    <scope>CHARACTERIZATION OF VARIANT MRT68 CYS-323</scope>
    <scope>MUTAGENESIS OF ASP-233</scope>
</reference>
<reference key="19">
    <citation type="journal article" date="2023" name="J. Mol. Cell Biol.">
        <title>SARS-CoV-2 main protease Nsp5 cleaves and inactivates human tRNA methyltransferase TRMT1.</title>
        <authorList>
            <person name="Lu J.L."/>
            <person name="Zhou X.L."/>
        </authorList>
    </citation>
    <scope>PROTEOLYTIC CLEAVAGE (MICROBIAL INFECTION)</scope>
    <scope>MUTAGENESIS OF GLN-530</scope>
</reference>
<reference evidence="26" key="20">
    <citation type="journal article" date="2025" name="Elife">
        <title>Recognition and cleavage of human tRNA methyltransferase TRMT1 by the SARS-CoV-2 main protease.</title>
        <authorList>
            <person name="D'Oliviera A."/>
            <person name="Dai X."/>
            <person name="Mottaghinia S."/>
            <person name="Olson S."/>
            <person name="Geissler E.P."/>
            <person name="Etienne L."/>
            <person name="Zhang Y."/>
            <person name="Mugridge J.S."/>
        </authorList>
    </citation>
    <scope>X-RAY CRYSTALLOGRAPHY (1.9 ANGSTROMS) OF 526-536 IN COMPLEX WITH SARS-COV-2 VIRUS NSP5 PROTEIN</scope>
    <scope>PROTEOLYTIC CLEAVAGE (MICROBIAL INFECTION)</scope>
    <scope>MUTAGENESIS OF GLN-530 AND ALA-531</scope>
</reference>
<reference key="21">
    <citation type="journal article" date="2020" name="Hum. Mutat.">
        <title>An intellectual disability-associated missense variant in TRMT1 impairs tRNA modification and reconstitution of enzymatic activity.</title>
        <authorList>
            <person name="Zhang K."/>
            <person name="Lentini J.M."/>
            <person name="Prevost C.T."/>
            <person name="Hashem M.O."/>
            <person name="Alkuraya F.S."/>
            <person name="Fu D."/>
        </authorList>
    </citation>
    <scope>VARIANT MRT68 CYS-323</scope>
    <scope>CHARACTERIZATION OF VARIANT MRT68 CYS-323</scope>
</reference>
<dbReference type="EC" id="2.1.1.216" evidence="7 14 17"/>
<dbReference type="EMBL" id="AF196479">
    <property type="protein sequence ID" value="AAG28495.1"/>
    <property type="molecule type" value="mRNA"/>
</dbReference>
<dbReference type="EMBL" id="AK000251">
    <property type="protein sequence ID" value="BAA91031.1"/>
    <property type="molecule type" value="mRNA"/>
</dbReference>
<dbReference type="EMBL" id="AC005546">
    <property type="protein sequence ID" value="AAC33150.1"/>
    <property type="molecule type" value="Genomic_DNA"/>
</dbReference>
<dbReference type="EMBL" id="BC002492">
    <property type="protein sequence ID" value="AAH02492.1"/>
    <property type="molecule type" value="mRNA"/>
</dbReference>
<dbReference type="EMBL" id="BC018302">
    <property type="protein sequence ID" value="AAH18302.1"/>
    <property type="molecule type" value="mRNA"/>
</dbReference>
<dbReference type="EMBL" id="BC040126">
    <property type="protein sequence ID" value="AAH40126.1"/>
    <property type="molecule type" value="mRNA"/>
</dbReference>
<dbReference type="CCDS" id="CCDS12293.1">
    <molecule id="Q9NXH9-1"/>
</dbReference>
<dbReference type="CCDS" id="CCDS45997.1">
    <molecule id="Q9NXH9-2"/>
</dbReference>
<dbReference type="RefSeq" id="NP_001129507.1">
    <molecule id="Q9NXH9-1"/>
    <property type="nucleotide sequence ID" value="NM_001136035.4"/>
</dbReference>
<dbReference type="RefSeq" id="NP_001136026.1">
    <molecule id="Q9NXH9-2"/>
    <property type="nucleotide sequence ID" value="NM_001142554.3"/>
</dbReference>
<dbReference type="RefSeq" id="NP_001338689.1">
    <molecule id="Q9NXH9-2"/>
    <property type="nucleotide sequence ID" value="NM_001351760.2"/>
</dbReference>
<dbReference type="RefSeq" id="NP_060192.1">
    <molecule id="Q9NXH9-1"/>
    <property type="nucleotide sequence ID" value="NM_017722.5"/>
</dbReference>
<dbReference type="RefSeq" id="XP_016882433.1">
    <property type="nucleotide sequence ID" value="XM_017026944.1"/>
</dbReference>
<dbReference type="RefSeq" id="XP_016882434.1">
    <property type="nucleotide sequence ID" value="XM_017026945.1"/>
</dbReference>
<dbReference type="PDB" id="9DW6">
    <property type="method" value="X-ray"/>
    <property type="resolution" value="1.90 A"/>
    <property type="chains" value="C=526-536"/>
</dbReference>
<dbReference type="PDBsum" id="9DW6"/>
<dbReference type="SMR" id="Q9NXH9"/>
<dbReference type="BioGRID" id="120760">
    <property type="interactions" value="133"/>
</dbReference>
<dbReference type="FunCoup" id="Q9NXH9">
    <property type="interactions" value="3473"/>
</dbReference>
<dbReference type="IntAct" id="Q9NXH9">
    <property type="interactions" value="60"/>
</dbReference>
<dbReference type="MINT" id="Q9NXH9"/>
<dbReference type="STRING" id="9606.ENSP00000466967"/>
<dbReference type="GlyGen" id="Q9NXH9">
    <property type="glycosylation" value="1 site, 1 O-linked glycan (1 site)"/>
</dbReference>
<dbReference type="iPTMnet" id="Q9NXH9"/>
<dbReference type="PhosphoSitePlus" id="Q9NXH9"/>
<dbReference type="BioMuta" id="TRMT1"/>
<dbReference type="DMDM" id="12643821"/>
<dbReference type="jPOST" id="Q9NXH9"/>
<dbReference type="MassIVE" id="Q9NXH9"/>
<dbReference type="PaxDb" id="9606-ENSP00000466967"/>
<dbReference type="PeptideAtlas" id="Q9NXH9"/>
<dbReference type="ProteomicsDB" id="83100">
    <molecule id="Q9NXH9-1"/>
</dbReference>
<dbReference type="ProteomicsDB" id="83101">
    <molecule id="Q9NXH9-2"/>
</dbReference>
<dbReference type="Pumba" id="Q9NXH9"/>
<dbReference type="Antibodypedia" id="13510">
    <property type="antibodies" value="157 antibodies from 27 providers"/>
</dbReference>
<dbReference type="DNASU" id="55621"/>
<dbReference type="Ensembl" id="ENST00000221504.12">
    <molecule id="Q9NXH9-2"/>
    <property type="protein sequence ID" value="ENSP00000221504.7"/>
    <property type="gene ID" value="ENSG00000104907.13"/>
</dbReference>
<dbReference type="Ensembl" id="ENST00000357720.9">
    <molecule id="Q9NXH9-1"/>
    <property type="protein sequence ID" value="ENSP00000350352.4"/>
    <property type="gene ID" value="ENSG00000104907.13"/>
</dbReference>
<dbReference type="Ensembl" id="ENST00000437766.5">
    <molecule id="Q9NXH9-1"/>
    <property type="protein sequence ID" value="ENSP00000416149.1"/>
    <property type="gene ID" value="ENSG00000104907.13"/>
</dbReference>
<dbReference type="Ensembl" id="ENST00000592062.5">
    <molecule id="Q9NXH9-1"/>
    <property type="protein sequence ID" value="ENSP00000466967.1"/>
    <property type="gene ID" value="ENSG00000104907.13"/>
</dbReference>
<dbReference type="GeneID" id="55621"/>
<dbReference type="KEGG" id="hsa:55621"/>
<dbReference type="MANE-Select" id="ENST00000357720.9">
    <property type="protein sequence ID" value="ENSP00000350352.4"/>
    <property type="RefSeq nucleotide sequence ID" value="NM_001136035.4"/>
    <property type="RefSeq protein sequence ID" value="NP_001129507.1"/>
</dbReference>
<dbReference type="UCSC" id="uc002mwj.3">
    <molecule id="Q9NXH9-1"/>
    <property type="organism name" value="human"/>
</dbReference>
<dbReference type="AGR" id="HGNC:25980"/>
<dbReference type="CTD" id="55621"/>
<dbReference type="DisGeNET" id="55621"/>
<dbReference type="GeneCards" id="TRMT1"/>
<dbReference type="HGNC" id="HGNC:25980">
    <property type="gene designation" value="TRMT1"/>
</dbReference>
<dbReference type="HPA" id="ENSG00000104907">
    <property type="expression patterns" value="Low tissue specificity"/>
</dbReference>
<dbReference type="MalaCards" id="TRMT1"/>
<dbReference type="MIM" id="611669">
    <property type="type" value="gene"/>
</dbReference>
<dbReference type="MIM" id="618302">
    <property type="type" value="phenotype"/>
</dbReference>
<dbReference type="neXtProt" id="NX_Q9NXH9"/>
<dbReference type="OpenTargets" id="ENSG00000104907"/>
<dbReference type="Orphanet" id="528084">
    <property type="disease" value="Non-specific syndromic intellectual disability"/>
</dbReference>
<dbReference type="PharmGKB" id="PA134867808"/>
<dbReference type="VEuPathDB" id="HostDB:ENSG00000104907"/>
<dbReference type="eggNOG" id="KOG1253">
    <property type="taxonomic scope" value="Eukaryota"/>
</dbReference>
<dbReference type="GeneTree" id="ENSGT00530000063646"/>
<dbReference type="HOGENOM" id="CLU_010862_4_1_1"/>
<dbReference type="InParanoid" id="Q9NXH9"/>
<dbReference type="OMA" id="MKCCHEM"/>
<dbReference type="OrthoDB" id="6349953at2759"/>
<dbReference type="PAN-GO" id="Q9NXH9">
    <property type="GO annotations" value="3 GO annotations based on evolutionary models"/>
</dbReference>
<dbReference type="PhylomeDB" id="Q9NXH9"/>
<dbReference type="TreeFam" id="TF300851"/>
<dbReference type="PathwayCommons" id="Q9NXH9"/>
<dbReference type="Reactome" id="R-HSA-6782315">
    <property type="pathway name" value="tRNA modification in the nucleus and cytosol"/>
</dbReference>
<dbReference type="SignaLink" id="Q9NXH9"/>
<dbReference type="BioGRID-ORCS" id="55621">
    <property type="hits" value="42 hits in 1163 CRISPR screens"/>
</dbReference>
<dbReference type="ChiTaRS" id="TRMT1">
    <property type="organism name" value="human"/>
</dbReference>
<dbReference type="GenomeRNAi" id="55621"/>
<dbReference type="Pharos" id="Q9NXH9">
    <property type="development level" value="Tbio"/>
</dbReference>
<dbReference type="PRO" id="PR:Q9NXH9"/>
<dbReference type="Proteomes" id="UP000005640">
    <property type="component" value="Chromosome 19"/>
</dbReference>
<dbReference type="RNAct" id="Q9NXH9">
    <property type="molecule type" value="protein"/>
</dbReference>
<dbReference type="Bgee" id="ENSG00000104907">
    <property type="expression patterns" value="Expressed in lower esophagus mucosa and 150 other cell types or tissues"/>
</dbReference>
<dbReference type="ExpressionAtlas" id="Q9NXH9">
    <property type="expression patterns" value="baseline and differential"/>
</dbReference>
<dbReference type="GO" id="GO:0005737">
    <property type="term" value="C:cytoplasm"/>
    <property type="evidence" value="ECO:0000314"/>
    <property type="project" value="UniProtKB"/>
</dbReference>
<dbReference type="GO" id="GO:0005739">
    <property type="term" value="C:mitochondrion"/>
    <property type="evidence" value="ECO:0000314"/>
    <property type="project" value="UniProtKB"/>
</dbReference>
<dbReference type="GO" id="GO:0005654">
    <property type="term" value="C:nucleoplasm"/>
    <property type="evidence" value="ECO:0000304"/>
    <property type="project" value="Reactome"/>
</dbReference>
<dbReference type="GO" id="GO:0005634">
    <property type="term" value="C:nucleus"/>
    <property type="evidence" value="ECO:0000314"/>
    <property type="project" value="UniProtKB"/>
</dbReference>
<dbReference type="GO" id="GO:0003723">
    <property type="term" value="F:RNA binding"/>
    <property type="evidence" value="ECO:0007005"/>
    <property type="project" value="UniProtKB"/>
</dbReference>
<dbReference type="GO" id="GO:0160104">
    <property type="term" value="F:tRNA (guanine(26)-N2)-dimethyltransferase activity"/>
    <property type="evidence" value="ECO:0000314"/>
    <property type="project" value="UniProtKB"/>
</dbReference>
<dbReference type="GO" id="GO:0000049">
    <property type="term" value="F:tRNA binding"/>
    <property type="evidence" value="ECO:0007669"/>
    <property type="project" value="UniProtKB-KW"/>
</dbReference>
<dbReference type="GO" id="GO:0008270">
    <property type="term" value="F:zinc ion binding"/>
    <property type="evidence" value="ECO:0007669"/>
    <property type="project" value="UniProtKB-KW"/>
</dbReference>
<dbReference type="GO" id="GO:0006400">
    <property type="term" value="P:tRNA modification"/>
    <property type="evidence" value="ECO:0000304"/>
    <property type="project" value="Reactome"/>
</dbReference>
<dbReference type="GO" id="GO:0002940">
    <property type="term" value="P:tRNA N2-guanine methylation"/>
    <property type="evidence" value="ECO:0000314"/>
    <property type="project" value="UniProtKB"/>
</dbReference>
<dbReference type="FunFam" id="3.30.56.70:FF:000001">
    <property type="entry name" value="tRNA (guanine(26)-N(2))-dimethyltransferase"/>
    <property type="match status" value="1"/>
</dbReference>
<dbReference type="Gene3D" id="3.30.56.70">
    <property type="entry name" value="N2,N2-dimethylguanosine tRNA methyltransferase, C-terminal domain"/>
    <property type="match status" value="1"/>
</dbReference>
<dbReference type="Gene3D" id="3.40.50.150">
    <property type="entry name" value="Vaccinia Virus protein VP39"/>
    <property type="match status" value="1"/>
</dbReference>
<dbReference type="Gene3D" id="4.10.1000.10">
    <property type="entry name" value="Zinc finger, CCCH-type"/>
    <property type="match status" value="1"/>
</dbReference>
<dbReference type="InterPro" id="IPR029063">
    <property type="entry name" value="SAM-dependent_MTases_sf"/>
</dbReference>
<dbReference type="InterPro" id="IPR002905">
    <property type="entry name" value="Trm1"/>
</dbReference>
<dbReference type="InterPro" id="IPR042296">
    <property type="entry name" value="tRNA_met_Trm1_C"/>
</dbReference>
<dbReference type="InterPro" id="IPR000571">
    <property type="entry name" value="Znf_CCCH"/>
</dbReference>
<dbReference type="InterPro" id="IPR036855">
    <property type="entry name" value="Znf_CCCH_sf"/>
</dbReference>
<dbReference type="NCBIfam" id="TIGR00308">
    <property type="entry name" value="TRM1"/>
    <property type="match status" value="1"/>
</dbReference>
<dbReference type="PANTHER" id="PTHR10631">
    <property type="entry name" value="N 2 ,N 2 -DIMETHYLGUANOSINE TRNA METHYLTRANSFERASE"/>
    <property type="match status" value="1"/>
</dbReference>
<dbReference type="PANTHER" id="PTHR10631:SF3">
    <property type="entry name" value="TRNA (GUANINE(26)-N(2))-DIMETHYLTRANSFERASE"/>
    <property type="match status" value="1"/>
</dbReference>
<dbReference type="Pfam" id="PF02005">
    <property type="entry name" value="TRM"/>
    <property type="match status" value="1"/>
</dbReference>
<dbReference type="Pfam" id="PF00642">
    <property type="entry name" value="zf-CCCH"/>
    <property type="match status" value="1"/>
</dbReference>
<dbReference type="SMART" id="SM00356">
    <property type="entry name" value="ZnF_C3H1"/>
    <property type="match status" value="1"/>
</dbReference>
<dbReference type="SUPFAM" id="SSF90229">
    <property type="entry name" value="CCCH zinc finger"/>
    <property type="match status" value="1"/>
</dbReference>
<dbReference type="SUPFAM" id="SSF53335">
    <property type="entry name" value="S-adenosyl-L-methionine-dependent methyltransferases"/>
    <property type="match status" value="1"/>
</dbReference>
<dbReference type="PROSITE" id="PS51626">
    <property type="entry name" value="SAM_MT_TRM1"/>
    <property type="match status" value="1"/>
</dbReference>
<dbReference type="PROSITE" id="PS50103">
    <property type="entry name" value="ZF_C3H1"/>
    <property type="match status" value="1"/>
</dbReference>
<organism>
    <name type="scientific">Homo sapiens</name>
    <name type="common">Human</name>
    <dbReference type="NCBI Taxonomy" id="9606"/>
    <lineage>
        <taxon>Eukaryota</taxon>
        <taxon>Metazoa</taxon>
        <taxon>Chordata</taxon>
        <taxon>Craniata</taxon>
        <taxon>Vertebrata</taxon>
        <taxon>Euteleostomi</taxon>
        <taxon>Mammalia</taxon>
        <taxon>Eutheria</taxon>
        <taxon>Euarchontoglires</taxon>
        <taxon>Primates</taxon>
        <taxon>Haplorrhini</taxon>
        <taxon>Catarrhini</taxon>
        <taxon>Hominidae</taxon>
        <taxon>Homo</taxon>
    </lineage>
</organism>
<protein>
    <recommendedName>
        <fullName evidence="21">tRNA (guanine(26)-N(2))-dimethyltransferase</fullName>
        <ecNumber evidence="7 14 17">2.1.1.216</ecNumber>
    </recommendedName>
    <alternativeName>
        <fullName>tRNA 2,2-dimethylguanosine-26 methyltransferase</fullName>
    </alternativeName>
    <alternativeName>
        <fullName evidence="18">tRNA methyltransferase 1</fullName>
        <shortName evidence="18">hTRM1</shortName>
    </alternativeName>
    <alternativeName>
        <fullName>tRNA(guanine-26,N(2)-N(2)) methyltransferase</fullName>
    </alternativeName>
    <alternativeName>
        <fullName>tRNA(m(2,2)G26)dimethyltransferase</fullName>
    </alternativeName>
</protein>
<keyword id="KW-0002">3D-structure</keyword>
<keyword id="KW-0025">Alternative splicing</keyword>
<keyword id="KW-0963">Cytoplasm</keyword>
<keyword id="KW-0225">Disease variant</keyword>
<keyword id="KW-0991">Intellectual disability</keyword>
<keyword id="KW-0479">Metal-binding</keyword>
<keyword id="KW-0489">Methyltransferase</keyword>
<keyword id="KW-0496">Mitochondrion</keyword>
<keyword id="KW-0539">Nucleus</keyword>
<keyword id="KW-0597">Phosphoprotein</keyword>
<keyword id="KW-1267">Proteomics identification</keyword>
<keyword id="KW-1185">Reference proteome</keyword>
<keyword id="KW-0694">RNA-binding</keyword>
<keyword id="KW-0949">S-adenosyl-L-methionine</keyword>
<keyword id="KW-0808">Transferase</keyword>
<keyword id="KW-0809">Transit peptide</keyword>
<keyword id="KW-0819">tRNA processing</keyword>
<keyword id="KW-0820">tRNA-binding</keyword>
<keyword id="KW-0862">Zinc</keyword>
<keyword id="KW-0863">Zinc-finger</keyword>
<comment type="function">
    <text evidence="7 10 14 17">Dimethylates a single guanine residue at position 26 of most nuclear- and mitochondrial-encoded tRNAs using S-adenosyl-L-methionine as donor of the methyl groups (PubMed:10982862, PubMed:28784718, PubMed:37204604, PubMed:39786990). tRNA guanine(26)-dimethylation is required for redox homeostasis and ensure proper cellular proliferation and oxidative stress survival (PubMed:28784718).</text>
</comment>
<comment type="catalytic activity">
    <reaction evidence="5 7 10 14 17">
        <text>guanosine(26) in tRNA + 2 S-adenosyl-L-methionine = N(2)-dimethylguanosine(26) in tRNA + 2 S-adenosyl-L-homocysteine + 2 H(+)</text>
        <dbReference type="Rhea" id="RHEA:43140"/>
        <dbReference type="Rhea" id="RHEA-COMP:10359"/>
        <dbReference type="Rhea" id="RHEA-COMP:10360"/>
        <dbReference type="ChEBI" id="CHEBI:15378"/>
        <dbReference type="ChEBI" id="CHEBI:57856"/>
        <dbReference type="ChEBI" id="CHEBI:59789"/>
        <dbReference type="ChEBI" id="CHEBI:74269"/>
        <dbReference type="ChEBI" id="CHEBI:74513"/>
        <dbReference type="EC" id="2.1.1.216"/>
    </reaction>
</comment>
<comment type="interaction">
    <interactant intactId="EBI-748900">
        <id>Q9NXH9</id>
    </interactant>
    <interactant intactId="EBI-739552">
        <id>P43364</id>
        <label>MAGEA11</label>
    </interactant>
    <organismsDiffer>false</organismsDiffer>
    <experiments>5</experiments>
</comment>
<comment type="interaction">
    <interactant intactId="EBI-748900">
        <id>Q9NXH9</id>
    </interactant>
    <interactant intactId="EBI-10178634">
        <id>P43364-2</id>
        <label>MAGEA11</label>
    </interactant>
    <organismsDiffer>false</organismsDiffer>
    <experiments>3</experiments>
</comment>
<comment type="interaction">
    <interactant intactId="EBI-748900">
        <id>Q9NXH9</id>
    </interactant>
    <interactant intactId="EBI-710997">
        <id>P54274</id>
        <label>TERF1</label>
    </interactant>
    <organismsDiffer>false</organismsDiffer>
    <experiments>2</experiments>
</comment>
<comment type="subcellular location">
    <molecule>Isoform 1</molecule>
    <subcellularLocation>
        <location evidence="22 23 24">Mitochondrion</location>
    </subcellularLocation>
</comment>
<comment type="subcellular location">
    <molecule>Isoform 3</molecule>
    <subcellularLocation>
        <location evidence="22 23 24">Nucleus</location>
    </subcellularLocation>
    <subcellularLocation>
        <location evidence="22 23 24">Cytoplasm</location>
    </subcellularLocation>
</comment>
<comment type="alternative products">
    <event type="alternative splicing"/>
    <isoform>
        <id>Q9NXH9-1</id>
        <name>1</name>
        <sequence type="displayed"/>
    </isoform>
    <isoform>
        <id>Q9NXH9-2</id>
        <name>2</name>
        <sequence type="described" ref="VSP_016720"/>
    </isoform>
    <isoform>
        <id>Q9NXH9-3</id>
        <name>3</name>
        <sequence type="described" ref="VSP_062550"/>
    </isoform>
</comment>
<comment type="PTM">
    <text evidence="13 15 16">(Microbial infection) Cleaved between Gln-530 and Ala-531 by the 3C-like proteinase nsp5 from human coronavirus SARS-CoV-2, leading to its inactivation.</text>
</comment>
<comment type="disease" evidence="8 9 11 12 17">
    <disease id="DI-05452">
        <name>Intellectual developmental disorder, autosomal recessive 68</name>
        <acronym>MRT68</acronym>
        <description>A form of intellectual disability, a disorder characterized by significantly below average general intellectual functioning associated with impairments in adaptive behavior and manifested during the developmental period.</description>
        <dbReference type="MIM" id="618302"/>
    </disease>
    <text>The disease is caused by variants affecting the gene represented in this entry.</text>
</comment>
<comment type="similarity">
    <text evidence="5">Belongs to the class I-like SAM-binding methyltransferase superfamily. Trm1 family.</text>
</comment>
<evidence type="ECO:0000250" key="1">
    <source>
        <dbReference type="UniProtKB" id="O67010"/>
    </source>
</evidence>
<evidence type="ECO:0000250" key="2">
    <source>
        <dbReference type="UniProtKB" id="Q3TX08"/>
    </source>
</evidence>
<evidence type="ECO:0000255" key="3"/>
<evidence type="ECO:0000255" key="4">
    <source>
        <dbReference type="PROSITE-ProRule" id="PRU00723"/>
    </source>
</evidence>
<evidence type="ECO:0000255" key="5">
    <source>
        <dbReference type="PROSITE-ProRule" id="PRU00958"/>
    </source>
</evidence>
<evidence type="ECO:0000256" key="6">
    <source>
        <dbReference type="SAM" id="MobiDB-lite"/>
    </source>
</evidence>
<evidence type="ECO:0000269" key="7">
    <source>
    </source>
</evidence>
<evidence type="ECO:0000269" key="8">
    <source>
    </source>
</evidence>
<evidence type="ECO:0000269" key="9">
    <source>
    </source>
</evidence>
<evidence type="ECO:0000269" key="10">
    <source>
    </source>
</evidence>
<evidence type="ECO:0000269" key="11">
    <source>
    </source>
</evidence>
<evidence type="ECO:0000269" key="12">
    <source>
    </source>
</evidence>
<evidence type="ECO:0000269" key="13">
    <source>
    </source>
</evidence>
<evidence type="ECO:0000269" key="14">
    <source>
    </source>
</evidence>
<evidence type="ECO:0000269" key="15">
    <source>
    </source>
</evidence>
<evidence type="ECO:0000269" key="16">
    <source>
    </source>
</evidence>
<evidence type="ECO:0000269" key="17">
    <source>
    </source>
</evidence>
<evidence type="ECO:0000303" key="18">
    <source>
    </source>
</evidence>
<evidence type="ECO:0000303" key="19">
    <source>
    </source>
</evidence>
<evidence type="ECO:0000303" key="20">
    <source>
    </source>
</evidence>
<evidence type="ECO:0000305" key="21"/>
<evidence type="ECO:0000305" key="22">
    <source>
    </source>
</evidence>
<evidence type="ECO:0000305" key="23">
    <source>
    </source>
</evidence>
<evidence type="ECO:0000305" key="24">
    <source>
    </source>
</evidence>
<evidence type="ECO:0000312" key="25">
    <source>
        <dbReference type="HGNC" id="HGNC:25980"/>
    </source>
</evidence>
<evidence type="ECO:0007744" key="26">
    <source>
        <dbReference type="PDB" id="9DW6"/>
    </source>
</evidence>
<evidence type="ECO:0007744" key="27">
    <source>
    </source>
</evidence>
<evidence type="ECO:0007744" key="28">
    <source>
    </source>
</evidence>
<evidence type="ECO:0007744" key="29">
    <source>
    </source>
</evidence>
<evidence type="ECO:0007829" key="30">
    <source>
        <dbReference type="PDB" id="9DW6"/>
    </source>
</evidence>
<accession>Q9NXH9</accession>
<accession>O76103</accession>
<accession>Q548Y5</accession>
<accession>Q8WVA6</accession>
<sequence>MQGSSLWLSLTFRSARVLSRARFFEWQSPGLPNTAAMENGTGPYGEERPREVQETTVTEGAAKIAFPSANEVFYNPVQEFNRDLTCAVITEFARIQLGAKGIQIKVPGEKDTQKVVVDLSEQEEEKVELKESENLASGDQPRTAAVGEICEEGLHVLEGLAASGLRSIRFALEVPGLRSVVANDASTRAVDLIRRNVQLNDVAHLVQPSQADARMLMYQHQRVSERFDVIDLDPYGSPATFLDAAVQAVSEGGLLCVTCTDMAVLAGNSGETCYSKYGAMALKSRACHEMALRIVLHSLDLRANCYQRFVVPLLSISADFYVRVFVRVFTGQAKVKASASKQALVFQCVGCGAFHLQRLGKASGVPSGRAKFSAACGPPVTPECEHCGQRHQLGGPMWAEPIHDLDFVGRVLEAVSANPGRFHTSERIRGVLSVITEELPDVPLYYTLDQLSSTIHCNTPSLLQLRSALLHADFRVSLSHACKNAVKTDAPASALWDIMRCWEKECPVKRERLSETSPAFRILSVEPRLQANFTIREDANPSSRQRGLKRFQANPEANWGPRPRARPGGKAADEAMEERRRLLQNKRKEPPEDVAQRAARLKTFPCKRFKEGTCQRGDQCCYSHSPPTPRVSADAAPDCPETSNQTPPGPGAAAGPGID</sequence>
<name>TRM1_HUMAN</name>
<proteinExistence type="evidence at protein level"/>
<feature type="transit peptide" description="Mitochondrion" evidence="3">
    <location>
        <begin position="1"/>
        <end position="23"/>
    </location>
</feature>
<feature type="chain" id="PRO_0000147671" description="tRNA (guanine(26)-N(2))-dimethyltransferase" evidence="3">
    <location>
        <begin position="24"/>
        <end position="659"/>
    </location>
</feature>
<feature type="domain" description="Trm1 methyltransferase" evidence="5">
    <location>
        <begin position="55"/>
        <end position="499"/>
    </location>
</feature>
<feature type="zinc finger region" description="C3H1-type" evidence="4">
    <location>
        <begin position="600"/>
        <end position="627"/>
    </location>
</feature>
<feature type="region of interest" description="Disordered" evidence="6">
    <location>
        <begin position="537"/>
        <end position="578"/>
    </location>
</feature>
<feature type="region of interest" description="Disordered" evidence="6">
    <location>
        <begin position="616"/>
        <end position="659"/>
    </location>
</feature>
<feature type="binding site" evidence="1">
    <location>
        <position position="82"/>
    </location>
    <ligand>
        <name>S-adenosyl-L-methionine</name>
        <dbReference type="ChEBI" id="CHEBI:59789"/>
    </ligand>
</feature>
<feature type="binding site" evidence="1">
    <location>
        <position position="166"/>
    </location>
    <ligand>
        <name>S-adenosyl-L-methionine</name>
        <dbReference type="ChEBI" id="CHEBI:59789"/>
    </ligand>
</feature>
<feature type="binding site" evidence="1">
    <location>
        <position position="184"/>
    </location>
    <ligand>
        <name>S-adenosyl-L-methionine</name>
        <dbReference type="ChEBI" id="CHEBI:59789"/>
    </ligand>
</feature>
<feature type="binding site" evidence="1">
    <location>
        <position position="348"/>
    </location>
    <ligand>
        <name>Zn(2+)</name>
        <dbReference type="ChEBI" id="CHEBI:29105"/>
    </ligand>
</feature>
<feature type="binding site" evidence="1">
    <location>
        <position position="351"/>
    </location>
    <ligand>
        <name>Zn(2+)</name>
        <dbReference type="ChEBI" id="CHEBI:29105"/>
    </ligand>
</feature>
<feature type="binding site" evidence="1">
    <location>
        <position position="384"/>
    </location>
    <ligand>
        <name>Zn(2+)</name>
        <dbReference type="ChEBI" id="CHEBI:29105"/>
    </ligand>
</feature>
<feature type="binding site" evidence="1">
    <location>
        <position position="387"/>
    </location>
    <ligand>
        <name>Zn(2+)</name>
        <dbReference type="ChEBI" id="CHEBI:29105"/>
    </ligand>
</feature>
<feature type="site" description="(Microbial infection) Cleavage; by coronavirus SARS-CoV-2 proteinase nsp5" evidence="13 15 16">
    <location>
        <begin position="530"/>
        <end position="531"/>
    </location>
</feature>
<feature type="modified residue" description="Phosphoserine" evidence="2">
    <location>
        <position position="120"/>
    </location>
</feature>
<feature type="modified residue" description="Phosphoserine" evidence="29">
    <location>
        <position position="517"/>
    </location>
</feature>
<feature type="modified residue" description="Phosphoserine" evidence="28 29">
    <location>
        <position position="625"/>
    </location>
</feature>
<feature type="modified residue" description="Phosphothreonine" evidence="28">
    <location>
        <position position="628"/>
    </location>
</feature>
<feature type="modified residue" description="Phosphothreonine" evidence="27 28">
    <location>
        <position position="646"/>
    </location>
</feature>
<feature type="splice variant" id="VSP_062550" description="In isoform 3.">
    <location>
        <begin position="1"/>
        <end position="36"/>
    </location>
</feature>
<feature type="splice variant" id="VSP_016720" description="In isoform 2." evidence="19">
    <location>
        <begin position="340"/>
        <end position="368"/>
    </location>
</feature>
<feature type="sequence variant" id="VAR_090323" description="In MRT68; decreased tRNA guanine-dimethyltransferase activity." evidence="12 17">
    <original>R</original>
    <variation>C</variation>
    <location>
        <position position="323"/>
    </location>
</feature>
<feature type="mutagenesis site" description="Abolished tRNA guanine-dimethyltransferase activity." evidence="17">
    <original>D</original>
    <variation>A</variation>
    <location>
        <position position="233"/>
    </location>
</feature>
<feature type="mutagenesis site" description="Abolished tRNA guanine-dimethyltransferase activity." evidence="10">
    <original>C</original>
    <variation>R</variation>
    <location>
        <position position="348"/>
    </location>
</feature>
<feature type="mutagenesis site" description="Abolished cleavage by coronavirus SARS-CoV-2 proteinase nsp5." evidence="13 15 16">
    <original>Q</original>
    <variation>N</variation>
    <variation>A</variation>
    <variation>K</variation>
    <location>
        <position position="530"/>
    </location>
</feature>
<feature type="mutagenesis site" description="Does not affect cleavage by coronavirus SARS-CoV-2 proteinase nsp5." evidence="16">
    <original>A</original>
    <variation>S</variation>
    <location>
        <position position="531"/>
    </location>
</feature>
<feature type="sequence conflict" description="In Ref. 3; AAC33150." evidence="21" ref="3">
    <original>RCWE</original>
    <variation>Q</variation>
    <location>
        <begin position="500"/>
        <end position="503"/>
    </location>
</feature>
<feature type="strand" evidence="30">
    <location>
        <begin position="531"/>
        <end position="533"/>
    </location>
</feature>
<feature type="short sequence motif" description="Nuclear localization signal" evidence="10">
    <location sequence="Q9NXH9-3">
        <begin position="543"/>
        <end position="575"/>
    </location>
</feature>